<reference key="1">
    <citation type="journal article" date="1997" name="Nature">
        <title>The complete genome sequence of the Gram-positive bacterium Bacillus subtilis.</title>
        <authorList>
            <person name="Kunst F."/>
            <person name="Ogasawara N."/>
            <person name="Moszer I."/>
            <person name="Albertini A.M."/>
            <person name="Alloni G."/>
            <person name="Azevedo V."/>
            <person name="Bertero M.G."/>
            <person name="Bessieres P."/>
            <person name="Bolotin A."/>
            <person name="Borchert S."/>
            <person name="Borriss R."/>
            <person name="Boursier L."/>
            <person name="Brans A."/>
            <person name="Braun M."/>
            <person name="Brignell S.C."/>
            <person name="Bron S."/>
            <person name="Brouillet S."/>
            <person name="Bruschi C.V."/>
            <person name="Caldwell B."/>
            <person name="Capuano V."/>
            <person name="Carter N.M."/>
            <person name="Choi S.-K."/>
            <person name="Codani J.-J."/>
            <person name="Connerton I.F."/>
            <person name="Cummings N.J."/>
            <person name="Daniel R.A."/>
            <person name="Denizot F."/>
            <person name="Devine K.M."/>
            <person name="Duesterhoeft A."/>
            <person name="Ehrlich S.D."/>
            <person name="Emmerson P.T."/>
            <person name="Entian K.-D."/>
            <person name="Errington J."/>
            <person name="Fabret C."/>
            <person name="Ferrari E."/>
            <person name="Foulger D."/>
            <person name="Fritz C."/>
            <person name="Fujita M."/>
            <person name="Fujita Y."/>
            <person name="Fuma S."/>
            <person name="Galizzi A."/>
            <person name="Galleron N."/>
            <person name="Ghim S.-Y."/>
            <person name="Glaser P."/>
            <person name="Goffeau A."/>
            <person name="Golightly E.J."/>
            <person name="Grandi G."/>
            <person name="Guiseppi G."/>
            <person name="Guy B.J."/>
            <person name="Haga K."/>
            <person name="Haiech J."/>
            <person name="Harwood C.R."/>
            <person name="Henaut A."/>
            <person name="Hilbert H."/>
            <person name="Holsappel S."/>
            <person name="Hosono S."/>
            <person name="Hullo M.-F."/>
            <person name="Itaya M."/>
            <person name="Jones L.-M."/>
            <person name="Joris B."/>
            <person name="Karamata D."/>
            <person name="Kasahara Y."/>
            <person name="Klaerr-Blanchard M."/>
            <person name="Klein C."/>
            <person name="Kobayashi Y."/>
            <person name="Koetter P."/>
            <person name="Koningstein G."/>
            <person name="Krogh S."/>
            <person name="Kumano M."/>
            <person name="Kurita K."/>
            <person name="Lapidus A."/>
            <person name="Lardinois S."/>
            <person name="Lauber J."/>
            <person name="Lazarevic V."/>
            <person name="Lee S.-M."/>
            <person name="Levine A."/>
            <person name="Liu H."/>
            <person name="Masuda S."/>
            <person name="Mauel C."/>
            <person name="Medigue C."/>
            <person name="Medina N."/>
            <person name="Mellado R.P."/>
            <person name="Mizuno M."/>
            <person name="Moestl D."/>
            <person name="Nakai S."/>
            <person name="Noback M."/>
            <person name="Noone D."/>
            <person name="O'Reilly M."/>
            <person name="Ogawa K."/>
            <person name="Ogiwara A."/>
            <person name="Oudega B."/>
            <person name="Park S.-H."/>
            <person name="Parro V."/>
            <person name="Pohl T.M."/>
            <person name="Portetelle D."/>
            <person name="Porwollik S."/>
            <person name="Prescott A.M."/>
            <person name="Presecan E."/>
            <person name="Pujic P."/>
            <person name="Purnelle B."/>
            <person name="Rapoport G."/>
            <person name="Rey M."/>
            <person name="Reynolds S."/>
            <person name="Rieger M."/>
            <person name="Rivolta C."/>
            <person name="Rocha E."/>
            <person name="Roche B."/>
            <person name="Rose M."/>
            <person name="Sadaie Y."/>
            <person name="Sato T."/>
            <person name="Scanlan E."/>
            <person name="Schleich S."/>
            <person name="Schroeter R."/>
            <person name="Scoffone F."/>
            <person name="Sekiguchi J."/>
            <person name="Sekowska A."/>
            <person name="Seror S.J."/>
            <person name="Serror P."/>
            <person name="Shin B.-S."/>
            <person name="Soldo B."/>
            <person name="Sorokin A."/>
            <person name="Tacconi E."/>
            <person name="Takagi T."/>
            <person name="Takahashi H."/>
            <person name="Takemaru K."/>
            <person name="Takeuchi M."/>
            <person name="Tamakoshi A."/>
            <person name="Tanaka T."/>
            <person name="Terpstra P."/>
            <person name="Tognoni A."/>
            <person name="Tosato V."/>
            <person name="Uchiyama S."/>
            <person name="Vandenbol M."/>
            <person name="Vannier F."/>
            <person name="Vassarotti A."/>
            <person name="Viari A."/>
            <person name="Wambutt R."/>
            <person name="Wedler E."/>
            <person name="Wedler H."/>
            <person name="Weitzenegger T."/>
            <person name="Winters P."/>
            <person name="Wipat A."/>
            <person name="Yamamoto H."/>
            <person name="Yamane K."/>
            <person name="Yasumoto K."/>
            <person name="Yata K."/>
            <person name="Yoshida K."/>
            <person name="Yoshikawa H.-F."/>
            <person name="Zumstein E."/>
            <person name="Yoshikawa H."/>
            <person name="Danchin A."/>
        </authorList>
    </citation>
    <scope>NUCLEOTIDE SEQUENCE [LARGE SCALE GENOMIC DNA]</scope>
    <source>
        <strain>168</strain>
    </source>
</reference>
<reference key="2">
    <citation type="journal article" date="1995" name="Microbiology">
        <title>Determination of a 21548 bp nucleotide sequence around the 24 degrees region of the Bacillus subtilis chromosome.</title>
        <authorList>
            <person name="Ogawa K."/>
            <person name="Akagawa E."/>
            <person name="Nakamura K."/>
            <person name="Yamane K."/>
        </authorList>
    </citation>
    <scope>NUCLEOTIDE SEQUENCE [GENOMIC DNA] OF 98-306</scope>
    <source>
        <strain>168</strain>
    </source>
</reference>
<evidence type="ECO:0000250" key="1"/>
<evidence type="ECO:0000305" key="2"/>
<dbReference type="EMBL" id="AL009126">
    <property type="protein sequence ID" value="CAB12046.1"/>
    <property type="molecule type" value="Genomic_DNA"/>
</dbReference>
<dbReference type="EMBL" id="D30808">
    <property type="protein sequence ID" value="BAA06474.1"/>
    <property type="molecule type" value="Genomic_DNA"/>
</dbReference>
<dbReference type="PIR" id="D69753">
    <property type="entry name" value="D69753"/>
</dbReference>
<dbReference type="RefSeq" id="NP_388134.1">
    <property type="nucleotide sequence ID" value="NC_000964.3"/>
</dbReference>
<dbReference type="RefSeq" id="WP_003246254.1">
    <property type="nucleotide sequence ID" value="NZ_OZ025638.1"/>
</dbReference>
<dbReference type="SMR" id="P42242"/>
<dbReference type="FunCoup" id="P42242">
    <property type="interactions" value="11"/>
</dbReference>
<dbReference type="STRING" id="224308.BSU02520"/>
<dbReference type="CARD" id="ARO:3004541">
    <property type="molecule name" value="mphK"/>
    <property type="mechanism identifier" value="ARO:0001004"/>
    <property type="mechanism name" value="antibiotic inactivation"/>
</dbReference>
<dbReference type="PaxDb" id="224308-BSU02520"/>
<dbReference type="EnsemblBacteria" id="CAB12046">
    <property type="protein sequence ID" value="CAB12046"/>
    <property type="gene ID" value="BSU_02520"/>
</dbReference>
<dbReference type="GeneID" id="938408"/>
<dbReference type="KEGG" id="bsu:BSU02520"/>
<dbReference type="PATRIC" id="fig|224308.179.peg.260"/>
<dbReference type="eggNOG" id="COG3173">
    <property type="taxonomic scope" value="Bacteria"/>
</dbReference>
<dbReference type="InParanoid" id="P42242"/>
<dbReference type="OrthoDB" id="3806873at2"/>
<dbReference type="PhylomeDB" id="P42242"/>
<dbReference type="BioCyc" id="BSUB:BSU02520-MONOMER"/>
<dbReference type="Proteomes" id="UP000001570">
    <property type="component" value="Chromosome"/>
</dbReference>
<dbReference type="GO" id="GO:0005524">
    <property type="term" value="F:ATP binding"/>
    <property type="evidence" value="ECO:0007669"/>
    <property type="project" value="UniProtKB-KW"/>
</dbReference>
<dbReference type="GO" id="GO:0016301">
    <property type="term" value="F:kinase activity"/>
    <property type="evidence" value="ECO:0007669"/>
    <property type="project" value="UniProtKB-KW"/>
</dbReference>
<dbReference type="CDD" id="cd05152">
    <property type="entry name" value="MPH2"/>
    <property type="match status" value="1"/>
</dbReference>
<dbReference type="Gene3D" id="3.90.1200.10">
    <property type="match status" value="1"/>
</dbReference>
<dbReference type="Gene3D" id="3.30.200.20">
    <property type="entry name" value="Phosphorylase Kinase, domain 1"/>
    <property type="match status" value="1"/>
</dbReference>
<dbReference type="InterPro" id="IPR051678">
    <property type="entry name" value="AGP_Transferase"/>
</dbReference>
<dbReference type="InterPro" id="IPR002575">
    <property type="entry name" value="Aminoglycoside_PTrfase"/>
</dbReference>
<dbReference type="InterPro" id="IPR011009">
    <property type="entry name" value="Kinase-like_dom_sf"/>
</dbReference>
<dbReference type="PANTHER" id="PTHR21310:SF15">
    <property type="entry name" value="AMINOGLYCOSIDE PHOSPHOTRANSFERASE DOMAIN-CONTAINING PROTEIN"/>
    <property type="match status" value="1"/>
</dbReference>
<dbReference type="PANTHER" id="PTHR21310">
    <property type="entry name" value="AMINOGLYCOSIDE PHOSPHOTRANSFERASE-RELATED-RELATED"/>
    <property type="match status" value="1"/>
</dbReference>
<dbReference type="Pfam" id="PF01636">
    <property type="entry name" value="APH"/>
    <property type="match status" value="1"/>
</dbReference>
<dbReference type="SUPFAM" id="SSF56112">
    <property type="entry name" value="Protein kinase-like (PK-like)"/>
    <property type="match status" value="1"/>
</dbReference>
<proteinExistence type="inferred from homology"/>
<keyword id="KW-0067">ATP-binding</keyword>
<keyword id="KW-0418">Kinase</keyword>
<keyword id="KW-0547">Nucleotide-binding</keyword>
<keyword id="KW-1185">Reference proteome</keyword>
<keyword id="KW-0808">Transferase</keyword>
<accession>P42242</accession>
<protein>
    <recommendedName>
        <fullName>Uncharacterized protein YcbJ</fullName>
    </recommendedName>
</protein>
<organism>
    <name type="scientific">Bacillus subtilis (strain 168)</name>
    <dbReference type="NCBI Taxonomy" id="224308"/>
    <lineage>
        <taxon>Bacteria</taxon>
        <taxon>Bacillati</taxon>
        <taxon>Bacillota</taxon>
        <taxon>Bacilli</taxon>
        <taxon>Bacillales</taxon>
        <taxon>Bacillaceae</taxon>
        <taxon>Bacillus</taxon>
    </lineage>
</organism>
<comment type="similarity">
    <text evidence="2">Belongs to the aminoglycoside phosphotransferase family.</text>
</comment>
<name>YCBJ_BACSU</name>
<sequence length="306" mass="34481">MTNLNEKQLITEIVGLARSQGLTVHSENAQLNETGMDFQVVFAKDDTGMPWVLRKPRRSDVVERASAEGITLAFLRANLTADVPDWRIHTPELIAYPMLKGTPAAGIDLEQKQYVWNMDHQPPSDDFVRTLADILAELHGTDQISAGQSGIEVIRPEDFRQMTADSMVDVKNKLGVSTTLWERWQKWVDDDAYWPGFSSLIHGDLHPPHILIDQNGRVTGLLDWTEAKVADPAKDFVLYQTIFGEKETARLLEYYDQAGGRIWAKMQEHISEMQAAYPVEIAKLALQTQQEEHINMALEALGVTSD</sequence>
<gene>
    <name type="primary">ycbJ</name>
    <name type="ordered locus">BSU02520</name>
</gene>
<feature type="chain" id="PRO_0000204818" description="Uncharacterized protein YcbJ">
    <location>
        <begin position="1"/>
        <end position="306"/>
    </location>
</feature>
<feature type="active site" description="Proton acceptor" evidence="1">
    <location>
        <position position="204"/>
    </location>
</feature>